<name>HIS6_RHOE4</name>
<gene>
    <name evidence="1" type="primary">hisF</name>
    <name type="ordered locus">RER_34430</name>
</gene>
<dbReference type="EC" id="4.3.2.10" evidence="1"/>
<dbReference type="EMBL" id="AP008957">
    <property type="protein sequence ID" value="BAH34151.1"/>
    <property type="molecule type" value="Genomic_DNA"/>
</dbReference>
<dbReference type="RefSeq" id="WP_003942380.1">
    <property type="nucleotide sequence ID" value="NC_012490.1"/>
</dbReference>
<dbReference type="SMR" id="C1A0L6"/>
<dbReference type="GeneID" id="64141231"/>
<dbReference type="KEGG" id="rer:RER_34430"/>
<dbReference type="eggNOG" id="COG0107">
    <property type="taxonomic scope" value="Bacteria"/>
</dbReference>
<dbReference type="HOGENOM" id="CLU_048577_4_0_11"/>
<dbReference type="UniPathway" id="UPA00031">
    <property type="reaction ID" value="UER00010"/>
</dbReference>
<dbReference type="Proteomes" id="UP000002204">
    <property type="component" value="Chromosome"/>
</dbReference>
<dbReference type="GO" id="GO:0005737">
    <property type="term" value="C:cytoplasm"/>
    <property type="evidence" value="ECO:0007669"/>
    <property type="project" value="UniProtKB-SubCell"/>
</dbReference>
<dbReference type="GO" id="GO:0000107">
    <property type="term" value="F:imidazoleglycerol-phosphate synthase activity"/>
    <property type="evidence" value="ECO:0007669"/>
    <property type="project" value="UniProtKB-UniRule"/>
</dbReference>
<dbReference type="GO" id="GO:0016829">
    <property type="term" value="F:lyase activity"/>
    <property type="evidence" value="ECO:0007669"/>
    <property type="project" value="UniProtKB-KW"/>
</dbReference>
<dbReference type="GO" id="GO:0000105">
    <property type="term" value="P:L-histidine biosynthetic process"/>
    <property type="evidence" value="ECO:0007669"/>
    <property type="project" value="UniProtKB-UniRule"/>
</dbReference>
<dbReference type="CDD" id="cd04731">
    <property type="entry name" value="HisF"/>
    <property type="match status" value="1"/>
</dbReference>
<dbReference type="FunFam" id="3.20.20.70:FF:000006">
    <property type="entry name" value="Imidazole glycerol phosphate synthase subunit HisF"/>
    <property type="match status" value="1"/>
</dbReference>
<dbReference type="Gene3D" id="3.20.20.70">
    <property type="entry name" value="Aldolase class I"/>
    <property type="match status" value="1"/>
</dbReference>
<dbReference type="HAMAP" id="MF_01013">
    <property type="entry name" value="HisF"/>
    <property type="match status" value="1"/>
</dbReference>
<dbReference type="InterPro" id="IPR013785">
    <property type="entry name" value="Aldolase_TIM"/>
</dbReference>
<dbReference type="InterPro" id="IPR006062">
    <property type="entry name" value="His_biosynth"/>
</dbReference>
<dbReference type="InterPro" id="IPR004651">
    <property type="entry name" value="HisF"/>
</dbReference>
<dbReference type="InterPro" id="IPR050064">
    <property type="entry name" value="IGPS_HisA/HisF"/>
</dbReference>
<dbReference type="InterPro" id="IPR011060">
    <property type="entry name" value="RibuloseP-bd_barrel"/>
</dbReference>
<dbReference type="NCBIfam" id="TIGR00735">
    <property type="entry name" value="hisF"/>
    <property type="match status" value="1"/>
</dbReference>
<dbReference type="PANTHER" id="PTHR21235:SF2">
    <property type="entry name" value="IMIDAZOLE GLYCEROL PHOSPHATE SYNTHASE HISHF"/>
    <property type="match status" value="1"/>
</dbReference>
<dbReference type="PANTHER" id="PTHR21235">
    <property type="entry name" value="IMIDAZOLE GLYCEROL PHOSPHATE SYNTHASE SUBUNIT HISF/H IGP SYNTHASE SUBUNIT HISF/H"/>
    <property type="match status" value="1"/>
</dbReference>
<dbReference type="Pfam" id="PF00977">
    <property type="entry name" value="His_biosynth"/>
    <property type="match status" value="1"/>
</dbReference>
<dbReference type="SUPFAM" id="SSF51366">
    <property type="entry name" value="Ribulose-phoshate binding barrel"/>
    <property type="match status" value="1"/>
</dbReference>
<accession>C1A0L6</accession>
<feature type="chain" id="PRO_1000213217" description="Imidazole glycerol phosphate synthase subunit HisF">
    <location>
        <begin position="1"/>
        <end position="257"/>
    </location>
</feature>
<feature type="active site" evidence="1">
    <location>
        <position position="12"/>
    </location>
</feature>
<feature type="active site" evidence="1">
    <location>
        <position position="131"/>
    </location>
</feature>
<keyword id="KW-0028">Amino-acid biosynthesis</keyword>
<keyword id="KW-0963">Cytoplasm</keyword>
<keyword id="KW-0368">Histidine biosynthesis</keyword>
<keyword id="KW-0456">Lyase</keyword>
<reference key="1">
    <citation type="submission" date="2005-03" db="EMBL/GenBank/DDBJ databases">
        <title>Comparison of the complete genome sequences of Rhodococcus erythropolis PR4 and Rhodococcus opacus B4.</title>
        <authorList>
            <person name="Takarada H."/>
            <person name="Sekine M."/>
            <person name="Hosoyama A."/>
            <person name="Yamada R."/>
            <person name="Fujisawa T."/>
            <person name="Omata S."/>
            <person name="Shimizu A."/>
            <person name="Tsukatani N."/>
            <person name="Tanikawa S."/>
            <person name="Fujita N."/>
            <person name="Harayama S."/>
        </authorList>
    </citation>
    <scope>NUCLEOTIDE SEQUENCE [LARGE SCALE GENOMIC DNA]</scope>
    <source>
        <strain>PR4 / NBRC 100887</strain>
    </source>
</reference>
<evidence type="ECO:0000255" key="1">
    <source>
        <dbReference type="HAMAP-Rule" id="MF_01013"/>
    </source>
</evidence>
<protein>
    <recommendedName>
        <fullName evidence="1">Imidazole glycerol phosphate synthase subunit HisF</fullName>
        <ecNumber evidence="1">4.3.2.10</ecNumber>
    </recommendedName>
    <alternativeName>
        <fullName evidence="1">IGP synthase cyclase subunit</fullName>
    </alternativeName>
    <alternativeName>
        <fullName evidence="1">IGP synthase subunit HisF</fullName>
    </alternativeName>
    <alternativeName>
        <fullName evidence="1">ImGP synthase subunit HisF</fullName>
        <shortName evidence="1">IGPS subunit HisF</shortName>
    </alternativeName>
</protein>
<proteinExistence type="inferred from homology"/>
<organism>
    <name type="scientific">Rhodococcus erythropolis (strain PR4 / NBRC 100887)</name>
    <dbReference type="NCBI Taxonomy" id="234621"/>
    <lineage>
        <taxon>Bacteria</taxon>
        <taxon>Bacillati</taxon>
        <taxon>Actinomycetota</taxon>
        <taxon>Actinomycetes</taxon>
        <taxon>Mycobacteriales</taxon>
        <taxon>Nocardiaceae</taxon>
        <taxon>Rhodococcus</taxon>
        <taxon>Rhodococcus erythropolis group</taxon>
    </lineage>
</organism>
<sequence>MTLAVRVIPCLDVDAGRVVKGVNFENLRDAGDPVELAAAYDAQGADELTFLDVTASTSDRGTMLDVVSRTAEQVFIPLTVGGGVRTVADVDRLLRAGADKVSVNTAAIARPELLKELSERFGSQCIVLSVDARTVPQGQPDTPSGWEVTTHGGKRGTGIDAVEWAERGAELGVGEILLNSMDADGTKAGFDLLMIRAVRAAVHVPVIASGGAGLVEHFAPAVEAGADAVLAASVFHFGDLSIPEVKDAMRAEGIVVR</sequence>
<comment type="function">
    <text evidence="1">IGPS catalyzes the conversion of PRFAR and glutamine to IGP, AICAR and glutamate. The HisF subunit catalyzes the cyclization activity that produces IGP and AICAR from PRFAR using the ammonia provided by the HisH subunit.</text>
</comment>
<comment type="catalytic activity">
    <reaction evidence="1">
        <text>5-[(5-phospho-1-deoxy-D-ribulos-1-ylimino)methylamino]-1-(5-phospho-beta-D-ribosyl)imidazole-4-carboxamide + L-glutamine = D-erythro-1-(imidazol-4-yl)glycerol 3-phosphate + 5-amino-1-(5-phospho-beta-D-ribosyl)imidazole-4-carboxamide + L-glutamate + H(+)</text>
        <dbReference type="Rhea" id="RHEA:24793"/>
        <dbReference type="ChEBI" id="CHEBI:15378"/>
        <dbReference type="ChEBI" id="CHEBI:29985"/>
        <dbReference type="ChEBI" id="CHEBI:58278"/>
        <dbReference type="ChEBI" id="CHEBI:58359"/>
        <dbReference type="ChEBI" id="CHEBI:58475"/>
        <dbReference type="ChEBI" id="CHEBI:58525"/>
        <dbReference type="EC" id="4.3.2.10"/>
    </reaction>
</comment>
<comment type="pathway">
    <text evidence="1">Amino-acid biosynthesis; L-histidine biosynthesis; L-histidine from 5-phospho-alpha-D-ribose 1-diphosphate: step 5/9.</text>
</comment>
<comment type="subunit">
    <text evidence="1">Heterodimer of HisH and HisF.</text>
</comment>
<comment type="subcellular location">
    <subcellularLocation>
        <location evidence="1">Cytoplasm</location>
    </subcellularLocation>
</comment>
<comment type="similarity">
    <text evidence="1">Belongs to the HisA/HisF family.</text>
</comment>